<gene>
    <name type="primary">dpoZ</name>
    <name evidence="5" type="ORF">phiVC8_p29</name>
</gene>
<accession>G3FFN8</accession>
<feature type="chain" id="PRO_0000453679" description="DNA polymerase DpoZ">
    <location>
        <begin position="1"/>
        <end position="633"/>
    </location>
</feature>
<feature type="helix" evidence="6">
    <location>
        <begin position="5"/>
        <end position="8"/>
    </location>
</feature>
<feature type="helix" evidence="6">
    <location>
        <begin position="17"/>
        <end position="19"/>
    </location>
</feature>
<feature type="strand" evidence="6">
    <location>
        <begin position="21"/>
        <end position="24"/>
    </location>
</feature>
<feature type="strand" evidence="6">
    <location>
        <begin position="26"/>
        <end position="30"/>
    </location>
</feature>
<feature type="turn" evidence="6">
    <location>
        <begin position="34"/>
        <end position="36"/>
    </location>
</feature>
<feature type="strand" evidence="6">
    <location>
        <begin position="39"/>
        <end position="45"/>
    </location>
</feature>
<feature type="strand" evidence="6">
    <location>
        <begin position="51"/>
        <end position="55"/>
    </location>
</feature>
<feature type="turn" evidence="6">
    <location>
        <begin position="56"/>
        <end position="58"/>
    </location>
</feature>
<feature type="helix" evidence="6">
    <location>
        <begin position="61"/>
        <end position="70"/>
    </location>
</feature>
<feature type="strand" evidence="6">
    <location>
        <begin position="75"/>
        <end position="81"/>
    </location>
</feature>
<feature type="helix" evidence="6">
    <location>
        <begin position="82"/>
        <end position="91"/>
    </location>
</feature>
<feature type="helix" evidence="6">
    <location>
        <begin position="98"/>
        <end position="100"/>
    </location>
</feature>
<feature type="strand" evidence="6">
    <location>
        <begin position="101"/>
        <end position="103"/>
    </location>
</feature>
<feature type="helix" evidence="6">
    <location>
        <begin position="104"/>
        <end position="111"/>
    </location>
</feature>
<feature type="helix" evidence="6">
    <location>
        <begin position="131"/>
        <end position="139"/>
    </location>
</feature>
<feature type="helix" evidence="6">
    <location>
        <begin position="146"/>
        <end position="155"/>
    </location>
</feature>
<feature type="helix" evidence="6">
    <location>
        <begin position="161"/>
        <end position="164"/>
    </location>
</feature>
<feature type="helix" evidence="6">
    <location>
        <begin position="165"/>
        <end position="170"/>
    </location>
</feature>
<feature type="helix" evidence="6">
    <location>
        <begin position="173"/>
        <end position="201"/>
    </location>
</feature>
<feature type="helix" evidence="6">
    <location>
        <begin position="204"/>
        <end position="223"/>
    </location>
</feature>
<feature type="strand" evidence="6">
    <location>
        <begin position="225"/>
        <end position="227"/>
    </location>
</feature>
<feature type="helix" evidence="6">
    <location>
        <begin position="229"/>
        <end position="254"/>
    </location>
</feature>
<feature type="helix" evidence="6">
    <location>
        <begin position="263"/>
        <end position="269"/>
    </location>
</feature>
<feature type="strand" evidence="6">
    <location>
        <begin position="273"/>
        <end position="275"/>
    </location>
</feature>
<feature type="strand" evidence="6">
    <location>
        <begin position="278"/>
        <end position="280"/>
    </location>
</feature>
<feature type="strand" evidence="6">
    <location>
        <begin position="293"/>
        <end position="295"/>
    </location>
</feature>
<feature type="helix" evidence="6">
    <location>
        <begin position="299"/>
        <end position="303"/>
    </location>
</feature>
<feature type="helix" evidence="6">
    <location>
        <begin position="308"/>
        <end position="324"/>
    </location>
</feature>
<feature type="helix" evidence="6">
    <location>
        <begin position="325"/>
        <end position="333"/>
    </location>
</feature>
<feature type="strand" evidence="6">
    <location>
        <begin position="343"/>
        <end position="347"/>
    </location>
</feature>
<feature type="strand" evidence="6">
    <location>
        <begin position="355"/>
        <end position="357"/>
    </location>
</feature>
<feature type="strand" evidence="6">
    <location>
        <begin position="360"/>
        <end position="364"/>
    </location>
</feature>
<feature type="helix" evidence="6">
    <location>
        <begin position="366"/>
        <end position="368"/>
    </location>
</feature>
<feature type="helix" evidence="6">
    <location>
        <begin position="374"/>
        <end position="380"/>
    </location>
</feature>
<feature type="helix" evidence="6">
    <location>
        <begin position="381"/>
        <end position="383"/>
    </location>
</feature>
<feature type="strand" evidence="6">
    <location>
        <begin position="391"/>
        <end position="397"/>
    </location>
</feature>
<feature type="helix" evidence="6">
    <location>
        <begin position="400"/>
        <end position="409"/>
    </location>
</feature>
<feature type="helix" evidence="6">
    <location>
        <begin position="410"/>
        <end position="412"/>
    </location>
</feature>
<feature type="helix" evidence="6">
    <location>
        <begin position="414"/>
        <end position="422"/>
    </location>
</feature>
<feature type="helix" evidence="6">
    <location>
        <begin position="428"/>
        <end position="436"/>
    </location>
</feature>
<feature type="helix" evidence="6">
    <location>
        <begin position="450"/>
        <end position="458"/>
    </location>
</feature>
<feature type="helix" evidence="6">
    <location>
        <begin position="463"/>
        <end position="469"/>
    </location>
</feature>
<feature type="strand" evidence="6">
    <location>
        <begin position="474"/>
        <end position="478"/>
    </location>
</feature>
<feature type="strand" evidence="6">
    <location>
        <begin position="488"/>
        <end position="492"/>
    </location>
</feature>
<feature type="helix" evidence="6">
    <location>
        <begin position="494"/>
        <end position="506"/>
    </location>
</feature>
<feature type="helix" evidence="6">
    <location>
        <begin position="510"/>
        <end position="523"/>
    </location>
</feature>
<feature type="strand" evidence="6">
    <location>
        <begin position="525"/>
        <end position="528"/>
    </location>
</feature>
<feature type="strand" evidence="6">
    <location>
        <begin position="534"/>
        <end position="536"/>
    </location>
</feature>
<feature type="helix" evidence="6">
    <location>
        <begin position="538"/>
        <end position="540"/>
    </location>
</feature>
<feature type="helix" evidence="6">
    <location>
        <begin position="543"/>
        <end position="545"/>
    </location>
</feature>
<feature type="helix" evidence="6">
    <location>
        <begin position="546"/>
        <end position="570"/>
    </location>
</feature>
<feature type="helix" evidence="6">
    <location>
        <begin position="571"/>
        <end position="573"/>
    </location>
</feature>
<feature type="strand" evidence="6">
    <location>
        <begin position="574"/>
        <end position="580"/>
    </location>
</feature>
<feature type="strand" evidence="6">
    <location>
        <begin position="583"/>
        <end position="588"/>
    </location>
</feature>
<feature type="helix" evidence="6">
    <location>
        <begin position="592"/>
        <end position="603"/>
    </location>
</feature>
<feature type="strand" evidence="6">
    <location>
        <begin position="608"/>
        <end position="610"/>
    </location>
</feature>
<feature type="strand" evidence="6">
    <location>
        <begin position="614"/>
        <end position="622"/>
    </location>
</feature>
<feature type="helix" evidence="6">
    <location>
        <begin position="623"/>
        <end position="627"/>
    </location>
</feature>
<proteinExistence type="evidence at protein level"/>
<keyword id="KW-0002">3D-structure</keyword>
<keyword id="KW-0235">DNA replication</keyword>
<keyword id="KW-0239">DNA-directed DNA polymerase</keyword>
<keyword id="KW-0548">Nucleotidyltransferase</keyword>
<keyword id="KW-1185">Reference proteome</keyword>
<keyword id="KW-0808">Transferase</keyword>
<keyword id="KW-1194">Viral DNA replication</keyword>
<name>DPOZ_BPVC8</name>
<dbReference type="EMBL" id="JF712866">
    <property type="protein sequence ID" value="AEM62926.1"/>
    <property type="molecule type" value="Genomic_DNA"/>
</dbReference>
<dbReference type="RefSeq" id="YP_009140158.1">
    <property type="nucleotide sequence ID" value="NC_027118.1"/>
</dbReference>
<dbReference type="PDB" id="7PBK">
    <property type="method" value="X-ray"/>
    <property type="resolution" value="2.80 A"/>
    <property type="chains" value="A/B=1-633"/>
</dbReference>
<dbReference type="PDBsum" id="7PBK"/>
<dbReference type="SMR" id="G3FFN8"/>
<dbReference type="GeneID" id="24366413"/>
<dbReference type="KEGG" id="vg:24366413"/>
<dbReference type="OrthoDB" id="14842at10239"/>
<dbReference type="Proteomes" id="UP000008906">
    <property type="component" value="Genome"/>
</dbReference>
<dbReference type="GO" id="GO:0008408">
    <property type="term" value="F:3'-5' exonuclease activity"/>
    <property type="evidence" value="ECO:0007669"/>
    <property type="project" value="InterPro"/>
</dbReference>
<dbReference type="GO" id="GO:0003677">
    <property type="term" value="F:DNA binding"/>
    <property type="evidence" value="ECO:0007669"/>
    <property type="project" value="InterPro"/>
</dbReference>
<dbReference type="GO" id="GO:0003887">
    <property type="term" value="F:DNA-directed DNA polymerase activity"/>
    <property type="evidence" value="ECO:0007669"/>
    <property type="project" value="UniProtKB-KW"/>
</dbReference>
<dbReference type="GO" id="GO:0006261">
    <property type="term" value="P:DNA-templated DNA replication"/>
    <property type="evidence" value="ECO:0007669"/>
    <property type="project" value="InterPro"/>
</dbReference>
<dbReference type="GO" id="GO:0006302">
    <property type="term" value="P:double-strand break repair"/>
    <property type="evidence" value="ECO:0007669"/>
    <property type="project" value="TreeGrafter"/>
</dbReference>
<dbReference type="GO" id="GO:0039693">
    <property type="term" value="P:viral DNA genome replication"/>
    <property type="evidence" value="ECO:0007669"/>
    <property type="project" value="UniProtKB-KW"/>
</dbReference>
<dbReference type="Gene3D" id="3.30.70.370">
    <property type="match status" value="1"/>
</dbReference>
<dbReference type="Gene3D" id="1.10.150.20">
    <property type="entry name" value="5' to 3' exonuclease, C-terminal subdomain"/>
    <property type="match status" value="1"/>
</dbReference>
<dbReference type="Gene3D" id="3.30.420.10">
    <property type="entry name" value="Ribonuclease H-like superfamily/Ribonuclease H"/>
    <property type="match status" value="1"/>
</dbReference>
<dbReference type="Gene3D" id="1.20.1060.10">
    <property type="entry name" value="Taq DNA Polymerase, Chain T, domain 4"/>
    <property type="match status" value="1"/>
</dbReference>
<dbReference type="InterPro" id="IPR002562">
    <property type="entry name" value="3'-5'_exonuclease_dom"/>
</dbReference>
<dbReference type="InterPro" id="IPR001098">
    <property type="entry name" value="DNA-dir_DNA_pol_A_palm_dom"/>
</dbReference>
<dbReference type="InterPro" id="IPR043502">
    <property type="entry name" value="DNA/RNA_pol_sf"/>
</dbReference>
<dbReference type="InterPro" id="IPR002298">
    <property type="entry name" value="DNA_polymerase_A"/>
</dbReference>
<dbReference type="InterPro" id="IPR012337">
    <property type="entry name" value="RNaseH-like_sf"/>
</dbReference>
<dbReference type="InterPro" id="IPR036397">
    <property type="entry name" value="RNaseH_sf"/>
</dbReference>
<dbReference type="NCBIfam" id="NF038380">
    <property type="entry name" value="phage_DpoZ_1"/>
    <property type="match status" value="1"/>
</dbReference>
<dbReference type="PANTHER" id="PTHR10133">
    <property type="entry name" value="DNA POLYMERASE I"/>
    <property type="match status" value="1"/>
</dbReference>
<dbReference type="PANTHER" id="PTHR10133:SF27">
    <property type="entry name" value="DNA POLYMERASE NU"/>
    <property type="match status" value="1"/>
</dbReference>
<dbReference type="Pfam" id="PF00476">
    <property type="entry name" value="DNA_pol_A"/>
    <property type="match status" value="1"/>
</dbReference>
<dbReference type="Pfam" id="PF01612">
    <property type="entry name" value="DNA_pol_A_exo1"/>
    <property type="match status" value="1"/>
</dbReference>
<dbReference type="PRINTS" id="PR00868">
    <property type="entry name" value="DNAPOLI"/>
</dbReference>
<dbReference type="SMART" id="SM00482">
    <property type="entry name" value="POLAc"/>
    <property type="match status" value="1"/>
</dbReference>
<dbReference type="SUPFAM" id="SSF56672">
    <property type="entry name" value="DNA/RNA polymerases"/>
    <property type="match status" value="1"/>
</dbReference>
<dbReference type="SUPFAM" id="SSF53098">
    <property type="entry name" value="Ribonuclease H-like"/>
    <property type="match status" value="1"/>
</dbReference>
<protein>
    <recommendedName>
        <fullName evidence="3">DNA polymerase DpoZ</fullName>
    </recommendedName>
</protein>
<reference key="1">
    <citation type="journal article" date="2016" name="Virol. J.">
        <title>Genetic characterization of OVC8 lytic phage for Vibrio cholerae O1.</title>
        <authorList>
            <person name="Solis-Sanchez A."/>
            <person name="Hernandez-Chinas U."/>
            <person name="Navarro-Ocana A."/>
            <person name="De la Mora J."/>
            <person name="Xicohtencatl-Cortes J."/>
            <person name="Eslava-Campos C."/>
        </authorList>
    </citation>
    <scope>NUCLEOTIDE SEQUENCE [LARGE SCALE GENOMIC DNA]</scope>
</reference>
<reference key="2">
    <citation type="journal article" date="2021" name="Science">
        <title>Noncanonical DNA polymerization by aminoadenine-based siphoviruses.</title>
        <authorList>
            <person name="Pezo V."/>
            <person name="Jaziri F."/>
            <person name="Bourguignon P.Y."/>
            <person name="Louis D."/>
            <person name="Jacobs-Sera D."/>
            <person name="Rozenski J."/>
            <person name="Pochet S."/>
            <person name="Herdewijn P."/>
            <person name="Hatfull G.F."/>
            <person name="Kaminski P.A."/>
            <person name="Marliere P."/>
        </authorList>
    </citation>
    <scope>FUNCTION</scope>
    <scope>CATALYTIC ACTIVITY</scope>
    <scope>BIOPHYSICOCHEMICAL PROPERTIES</scope>
</reference>
<evidence type="ECO:0000250" key="1">
    <source>
        <dbReference type="UniProtKB" id="A0A2H5BHJ5"/>
    </source>
</evidence>
<evidence type="ECO:0000269" key="2">
    <source>
    </source>
</evidence>
<evidence type="ECO:0000303" key="3">
    <source>
    </source>
</evidence>
<evidence type="ECO:0000305" key="4"/>
<evidence type="ECO:0000312" key="5">
    <source>
        <dbReference type="EMBL" id="AEM62926.1"/>
    </source>
</evidence>
<evidence type="ECO:0007829" key="6">
    <source>
        <dbReference type="PDB" id="7PBK"/>
    </source>
</evidence>
<comment type="function">
    <text evidence="1">DNA polymerase that preferentially incorporates the non-canonical base aminoadenine/dZTP instead of adenine into the synthesized DNA. More efficient in using dZTP instead of dATP as a substrate. In addition to this preference for dZTP, the phage also encodes a dATP triphosphohydrolase that removes dATP and its precursor dADP from the nucleotide pool of the host.</text>
</comment>
<comment type="catalytic activity">
    <reaction evidence="2">
        <text>DNA(n) + a 2'-deoxyribonucleoside 5'-triphosphate = DNA(n+1) + diphosphate</text>
        <dbReference type="Rhea" id="RHEA:22508"/>
        <dbReference type="Rhea" id="RHEA-COMP:17339"/>
        <dbReference type="Rhea" id="RHEA-COMP:17340"/>
        <dbReference type="ChEBI" id="CHEBI:33019"/>
        <dbReference type="ChEBI" id="CHEBI:61560"/>
        <dbReference type="ChEBI" id="CHEBI:173112"/>
    </reaction>
</comment>
<comment type="catalytic activity">
    <reaction evidence="2">
        <text>dZTP + DNA(n) = DNA(n)-Z + diphosphate</text>
        <dbReference type="Rhea" id="RHEA:67728"/>
        <dbReference type="Rhea" id="RHEA-COMP:17339"/>
        <dbReference type="Rhea" id="RHEA-COMP:17341"/>
        <dbReference type="ChEBI" id="CHEBI:33019"/>
        <dbReference type="ChEBI" id="CHEBI:172931"/>
        <dbReference type="ChEBI" id="CHEBI:172959"/>
        <dbReference type="ChEBI" id="CHEBI:173112"/>
    </reaction>
</comment>
<comment type="biophysicochemical properties">
    <kinetics>
        <KM evidence="2">0.1 uM for dZTP</KM>
        <KM evidence="2">4.5 uM for dATP</KM>
    </kinetics>
</comment>
<comment type="similarity">
    <text evidence="4">Belongs to the DNA polymerase type-A family. DpoZ subfamily.</text>
</comment>
<sequence>MKLDWERTGRRMGFIDLSKYEVWSYDTECTGLQYKVDKVFGFSIATPDGQSGYFDVREQPESLQWLAEQVEPYKGTIVCHNASFDYRMSLHSGIKLPLSQIDDTGIRACCINEHESTIFPWTRGRAGDYSLDYLAKKYVGAQKYAEIYDELAALFGGKATRKTQMPNLYRAPSGLVRKYACPDAELTLELWLEQEELIKKRGLERIVAFERKVMPTLIRTEARGVRVDLDYAEQAIFKMDGVVRENQAKMFALAGREFNPNSPKQVREVFGAKEEGGVWKSRDGTILERTATGNPCLDADALRSMTDPLAAAVLELRSNIKTKDTFLAKHVVEHSVGGRVYPNINQMKGEDGGTGTGRLSYTGPALQQIPSRNKRIAAIIKPAFLPEEGQLWLDSDMASFEVRIFAHLVAAYNPAIAKAYAENPELDLHQWVGDLMGIPRNASYSGQPNAKQMNLGMIFNRGDGAVADSLGMPWEWCEFTDKKGELIRYKKAGREAKSIIAAYHSQIQGVKTLATRAQKIAEERGWIQTAHGRRLRFPNGYKSYKASGILIQATAADENKENWLRIEDALGSDGSMILNTHDSYSMSVDENWKPIWERVKKAVERQTLRVPLLLEFDGVGKNWAEAKGLIDVH</sequence>
<organism>
    <name type="scientific">Vibrio phage phiVC8</name>
    <dbReference type="NCBI Taxonomy" id="1076759"/>
    <lineage>
        <taxon>Viruses</taxon>
        <taxon>Duplodnaviria</taxon>
        <taxon>Heunggongvirae</taxon>
        <taxon>Uroviricota</taxon>
        <taxon>Caudoviricetes</taxon>
        <taxon>Enhodamvirus</taxon>
        <taxon>Enhodamvirus VC8</taxon>
    </lineage>
</organism>
<organismHost>
    <name type="scientific">Vibrio cholerae</name>
    <dbReference type="NCBI Taxonomy" id="666"/>
</organismHost>